<comment type="function">
    <text>May be involved in transcriptional regulation.</text>
</comment>
<comment type="interaction">
    <interactant intactId="EBI-12006574">
        <id>Q96BR6</id>
    </interactant>
    <interactant intactId="EBI-742909">
        <id>Q9H6L4</id>
        <label>ARMC7</label>
    </interactant>
    <organismsDiffer>false</organismsDiffer>
    <experiments>3</experiments>
</comment>
<comment type="interaction">
    <interactant intactId="EBI-12006574">
        <id>Q96BR6</id>
    </interactant>
    <interactant intactId="EBI-11975051">
        <id>Q8TD16-2</id>
        <label>BICD2</label>
    </interactant>
    <organismsDiffer>false</organismsDiffer>
    <experiments>3</experiments>
</comment>
<comment type="interaction">
    <interactant intactId="EBI-12006574">
        <id>Q96BR6</id>
    </interactant>
    <interactant intactId="EBI-10311131">
        <id>Q9NP86</id>
        <label>CABP5</label>
    </interactant>
    <organismsDiffer>false</organismsDiffer>
    <experiments>3</experiments>
</comment>
<comment type="interaction">
    <interactant intactId="EBI-12006574">
        <id>Q96BR6</id>
    </interactant>
    <interactant intactId="EBI-11063830">
        <id>Q86X02</id>
        <label>CDR2L</label>
    </interactant>
    <organismsDiffer>false</organismsDiffer>
    <experiments>3</experiments>
</comment>
<comment type="interaction">
    <interactant intactId="EBI-12006574">
        <id>Q96BR6</id>
    </interactant>
    <interactant intactId="EBI-739624">
        <id>Q8NHQ1</id>
        <label>CEP70</label>
    </interactant>
    <organismsDiffer>false</organismsDiffer>
    <experiments>3</experiments>
</comment>
<comment type="interaction">
    <interactant intactId="EBI-12006574">
        <id>Q96BR6</id>
    </interactant>
    <interactant intactId="EBI-3867333">
        <id>A8MQ03</id>
        <label>CYSRT1</label>
    </interactant>
    <organismsDiffer>false</organismsDiffer>
    <experiments>3</experiments>
</comment>
<comment type="interaction">
    <interactant intactId="EBI-12006574">
        <id>Q96BR6</id>
    </interactant>
    <interactant intactId="EBI-5916454">
        <id>A6NEM1</id>
        <label>GOLGA6L9</label>
    </interactant>
    <organismsDiffer>false</organismsDiffer>
    <experiments>3</experiments>
</comment>
<comment type="interaction">
    <interactant intactId="EBI-12006574">
        <id>Q96BR6</id>
    </interactant>
    <interactant intactId="EBI-3044087">
        <id>Q7Z3Y8</id>
        <label>KRT27</label>
    </interactant>
    <organismsDiffer>false</organismsDiffer>
    <experiments>3</experiments>
</comment>
<comment type="interaction">
    <interactant intactId="EBI-12006574">
        <id>Q96BR6</id>
    </interactant>
    <interactant intactId="EBI-11959885">
        <id>Q07627</id>
        <label>KRTAP1-1</label>
    </interactant>
    <organismsDiffer>false</organismsDiffer>
    <experiments>3</experiments>
</comment>
<comment type="interaction">
    <interactant intactId="EBI-12006574">
        <id>Q96BR6</id>
    </interactant>
    <interactant intactId="EBI-12012928">
        <id>P60371</id>
        <label>KRTAP10-6</label>
    </interactant>
    <organismsDiffer>false</organismsDiffer>
    <experiments>3</experiments>
</comment>
<comment type="interaction">
    <interactant intactId="EBI-12006574">
        <id>Q96BR6</id>
    </interactant>
    <interactant intactId="EBI-10171774">
        <id>P60410</id>
        <label>KRTAP10-8</label>
    </interactant>
    <organismsDiffer>false</organismsDiffer>
    <experiments>3</experiments>
</comment>
<comment type="interaction">
    <interactant intactId="EBI-12006574">
        <id>Q96BR6</id>
    </interactant>
    <interactant intactId="EBI-724076">
        <id>Q99750</id>
        <label>MDFI</label>
    </interactant>
    <organismsDiffer>false</organismsDiffer>
    <experiments>3</experiments>
</comment>
<comment type="interaction">
    <interactant intactId="EBI-12006574">
        <id>Q96BR6</id>
    </interactant>
    <interactant intactId="EBI-10172526">
        <id>Q9UJV3-2</id>
        <label>MID2</label>
    </interactant>
    <organismsDiffer>false</organismsDiffer>
    <experiments>3</experiments>
</comment>
<comment type="interaction">
    <interactant intactId="EBI-12006574">
        <id>Q96BR6</id>
    </interactant>
    <interactant intactId="EBI-11522433">
        <id>Q5JR59-3</id>
        <label>MTUS2</label>
    </interactant>
    <organismsDiffer>false</organismsDiffer>
    <experiments>3</experiments>
</comment>
<comment type="interaction">
    <interactant intactId="EBI-12006574">
        <id>Q96BR6</id>
    </interactant>
    <interactant intactId="EBI-302355">
        <id>Q9UL42</id>
        <label>PNMA2</label>
    </interactant>
    <organismsDiffer>false</organismsDiffer>
    <experiments>3</experiments>
</comment>
<comment type="interaction">
    <interactant intactId="EBI-12006574">
        <id>Q96BR6</id>
    </interactant>
    <interactant intactId="EBI-359224">
        <id>Q13077</id>
        <label>TRAF1</label>
    </interactant>
    <organismsDiffer>false</organismsDiffer>
    <experiments>3</experiments>
</comment>
<comment type="interaction">
    <interactant intactId="EBI-12006574">
        <id>Q96BR6</id>
    </interactant>
    <interactant intactId="EBI-747993">
        <id>Q9NQZ6</id>
        <label>ZC4H2</label>
    </interactant>
    <organismsDiffer>false</organismsDiffer>
    <experiments>5</experiments>
</comment>
<comment type="interaction">
    <interactant intactId="EBI-12006574">
        <id>Q96BR6</id>
    </interactant>
    <interactant intactId="EBI-373456">
        <id>Q9Y3S2</id>
        <label>ZNF330</label>
    </interactant>
    <organismsDiffer>false</organismsDiffer>
    <experiments>3</experiments>
</comment>
<comment type="subcellular location">
    <subcellularLocation>
        <location evidence="5">Nucleus</location>
    </subcellularLocation>
</comment>
<comment type="alternative products">
    <event type="alternative splicing"/>
    <isoform>
        <id>Q96BR6-1</id>
        <name>1</name>
        <sequence type="displayed"/>
    </isoform>
    <isoform>
        <id>Q96BR6-2</id>
        <name>2</name>
        <sequence type="described" ref="VSP_047204"/>
    </isoform>
</comment>
<comment type="similarity">
    <text evidence="5">Belongs to the krueppel C2H2-type zinc-finger protein family.</text>
</comment>
<accession>Q96BR6</accession>
<accession>B3KP94</accession>
<accession>Q5VT39</accession>
<accession>Q9H9Q6</accession>
<dbReference type="EMBL" id="AK022668">
    <property type="protein sequence ID" value="BAB14166.1"/>
    <property type="molecule type" value="mRNA"/>
</dbReference>
<dbReference type="EMBL" id="AK056020">
    <property type="protein sequence ID" value="BAG51606.1"/>
    <property type="molecule type" value="mRNA"/>
</dbReference>
<dbReference type="EMBL" id="AL627095">
    <property type="status" value="NOT_ANNOTATED_CDS"/>
    <property type="molecule type" value="Genomic_DNA"/>
</dbReference>
<dbReference type="EMBL" id="BC015312">
    <property type="protein sequence ID" value="AAH15312.1"/>
    <property type="molecule type" value="mRNA"/>
</dbReference>
<dbReference type="CCDS" id="CCDS31088.1">
    <molecule id="Q96BR6-1"/>
</dbReference>
<dbReference type="CCDS" id="CCDS44345.1">
    <molecule id="Q96BR6-2"/>
</dbReference>
<dbReference type="RefSeq" id="NP_001136044.1">
    <molecule id="Q96BR6-2"/>
    <property type="nucleotide sequence ID" value="NM_001142572.2"/>
</dbReference>
<dbReference type="RefSeq" id="NP_079080.2">
    <molecule id="Q96BR6-1"/>
    <property type="nucleotide sequence ID" value="NM_024804.3"/>
</dbReference>
<dbReference type="SMR" id="Q96BR6"/>
<dbReference type="BioGRID" id="122950">
    <property type="interactions" value="57"/>
</dbReference>
<dbReference type="FunCoup" id="Q96BR6">
    <property type="interactions" value="88"/>
</dbReference>
<dbReference type="IntAct" id="Q96BR6">
    <property type="interactions" value="50"/>
</dbReference>
<dbReference type="MINT" id="Q96BR6"/>
<dbReference type="STRING" id="9606.ENSP00000342818"/>
<dbReference type="iPTMnet" id="Q96BR6"/>
<dbReference type="PhosphoSitePlus" id="Q96BR6"/>
<dbReference type="BioMuta" id="ZNF669"/>
<dbReference type="DMDM" id="94730684"/>
<dbReference type="jPOST" id="Q96BR6"/>
<dbReference type="MassIVE" id="Q96BR6"/>
<dbReference type="PaxDb" id="9606-ENSP00000342818"/>
<dbReference type="PeptideAtlas" id="Q96BR6"/>
<dbReference type="ProteomicsDB" id="3525"/>
<dbReference type="ProteomicsDB" id="76103">
    <molecule id="Q96BR6-1"/>
</dbReference>
<dbReference type="Antibodypedia" id="34724">
    <property type="antibodies" value="45 antibodies from 13 providers"/>
</dbReference>
<dbReference type="DNASU" id="79862"/>
<dbReference type="Ensembl" id="ENST00000343381.10">
    <molecule id="Q96BR6-1"/>
    <property type="protein sequence ID" value="ENSP00000342818.6"/>
    <property type="gene ID" value="ENSG00000188295.15"/>
</dbReference>
<dbReference type="Ensembl" id="ENST00000448299.7">
    <molecule id="Q96BR6-2"/>
    <property type="protein sequence ID" value="ENSP00000404370.2"/>
    <property type="gene ID" value="ENSG00000188295.15"/>
</dbReference>
<dbReference type="GeneID" id="79862"/>
<dbReference type="KEGG" id="hsa:79862"/>
<dbReference type="MANE-Select" id="ENST00000448299.7">
    <molecule id="Q96BR6-2"/>
    <property type="protein sequence ID" value="ENSP00000404370.2"/>
    <property type="RefSeq nucleotide sequence ID" value="NM_001142572.2"/>
    <property type="RefSeq protein sequence ID" value="NP_001136044.1"/>
</dbReference>
<dbReference type="UCSC" id="uc001ice.3">
    <molecule id="Q96BR6-1"/>
    <property type="organism name" value="human"/>
</dbReference>
<dbReference type="AGR" id="HGNC:25736"/>
<dbReference type="CTD" id="79862"/>
<dbReference type="DisGeNET" id="79862"/>
<dbReference type="GeneCards" id="ZNF669"/>
<dbReference type="HGNC" id="HGNC:25736">
    <property type="gene designation" value="ZNF669"/>
</dbReference>
<dbReference type="HPA" id="ENSG00000188295">
    <property type="expression patterns" value="Low tissue specificity"/>
</dbReference>
<dbReference type="neXtProt" id="NX_Q96BR6"/>
<dbReference type="OpenTargets" id="ENSG00000188295"/>
<dbReference type="PharmGKB" id="PA142670516"/>
<dbReference type="VEuPathDB" id="HostDB:ENSG00000188295"/>
<dbReference type="eggNOG" id="KOG1721">
    <property type="taxonomic scope" value="Eukaryota"/>
</dbReference>
<dbReference type="GeneTree" id="ENSGT00940000164691"/>
<dbReference type="HOGENOM" id="CLU_002678_0_10_1"/>
<dbReference type="InParanoid" id="Q96BR6"/>
<dbReference type="OMA" id="PCREPRA"/>
<dbReference type="OrthoDB" id="6077919at2759"/>
<dbReference type="PAN-GO" id="Q96BR6">
    <property type="GO annotations" value="3 GO annotations based on evolutionary models"/>
</dbReference>
<dbReference type="PhylomeDB" id="Q96BR6"/>
<dbReference type="TreeFam" id="TF338854"/>
<dbReference type="PathwayCommons" id="Q96BR6"/>
<dbReference type="Reactome" id="R-HSA-212436">
    <property type="pathway name" value="Generic Transcription Pathway"/>
</dbReference>
<dbReference type="Reactome" id="R-HSA-9843940">
    <property type="pathway name" value="Regulation of endogenous retroelements by KRAB-ZFP proteins"/>
</dbReference>
<dbReference type="SignaLink" id="Q96BR6"/>
<dbReference type="BioGRID-ORCS" id="79862">
    <property type="hits" value="16 hits in 1182 CRISPR screens"/>
</dbReference>
<dbReference type="ChiTaRS" id="ZNF669">
    <property type="organism name" value="human"/>
</dbReference>
<dbReference type="GenomeRNAi" id="79862"/>
<dbReference type="Pharos" id="Q96BR6">
    <property type="development level" value="Tdark"/>
</dbReference>
<dbReference type="PRO" id="PR:Q96BR6"/>
<dbReference type="Proteomes" id="UP000005640">
    <property type="component" value="Chromosome 1"/>
</dbReference>
<dbReference type="RNAct" id="Q96BR6">
    <property type="molecule type" value="protein"/>
</dbReference>
<dbReference type="Bgee" id="ENSG00000188295">
    <property type="expression patterns" value="Expressed in olfactory bulb and 199 other cell types or tissues"/>
</dbReference>
<dbReference type="ExpressionAtlas" id="Q96BR6">
    <property type="expression patterns" value="baseline and differential"/>
</dbReference>
<dbReference type="GO" id="GO:0005634">
    <property type="term" value="C:nucleus"/>
    <property type="evidence" value="ECO:0000318"/>
    <property type="project" value="GO_Central"/>
</dbReference>
<dbReference type="GO" id="GO:0000981">
    <property type="term" value="F:DNA-binding transcription factor activity, RNA polymerase II-specific"/>
    <property type="evidence" value="ECO:0000318"/>
    <property type="project" value="GO_Central"/>
</dbReference>
<dbReference type="GO" id="GO:0000977">
    <property type="term" value="F:RNA polymerase II transcription regulatory region sequence-specific DNA binding"/>
    <property type="evidence" value="ECO:0000318"/>
    <property type="project" value="GO_Central"/>
</dbReference>
<dbReference type="GO" id="GO:0008270">
    <property type="term" value="F:zinc ion binding"/>
    <property type="evidence" value="ECO:0007669"/>
    <property type="project" value="UniProtKB-KW"/>
</dbReference>
<dbReference type="GO" id="GO:0006357">
    <property type="term" value="P:regulation of transcription by RNA polymerase II"/>
    <property type="evidence" value="ECO:0000318"/>
    <property type="project" value="GO_Central"/>
</dbReference>
<dbReference type="CDD" id="cd07765">
    <property type="entry name" value="KRAB_A-box"/>
    <property type="match status" value="1"/>
</dbReference>
<dbReference type="FunFam" id="3.30.160.60:FF:002737">
    <property type="entry name" value="AGAP008430-PA"/>
    <property type="match status" value="1"/>
</dbReference>
<dbReference type="FunFam" id="3.30.160.60:FF:001479">
    <property type="entry name" value="ZFP69 zinc finger protein B"/>
    <property type="match status" value="1"/>
</dbReference>
<dbReference type="FunFam" id="3.30.160.60:FF:000240">
    <property type="entry name" value="Zinc finger protein 250"/>
    <property type="match status" value="1"/>
</dbReference>
<dbReference type="FunFam" id="3.30.160.60:FF:000184">
    <property type="entry name" value="Zinc finger protein 333"/>
    <property type="match status" value="1"/>
</dbReference>
<dbReference type="FunFam" id="3.30.160.60:FF:001498">
    <property type="entry name" value="Zinc finger protein 404"/>
    <property type="match status" value="1"/>
</dbReference>
<dbReference type="FunFam" id="3.30.160.60:FF:001004">
    <property type="entry name" value="Zinc finger protein 426"/>
    <property type="match status" value="1"/>
</dbReference>
<dbReference type="FunFam" id="3.30.160.60:FF:002280">
    <property type="entry name" value="Zinc finger protein 669"/>
    <property type="match status" value="1"/>
</dbReference>
<dbReference type="FunFam" id="3.30.160.60:FF:001933">
    <property type="entry name" value="Zinc finger protein 870"/>
    <property type="match status" value="1"/>
</dbReference>
<dbReference type="FunFam" id="3.30.160.60:FF:002010">
    <property type="entry name" value="Zinc finger, C2H2 type"/>
    <property type="match status" value="1"/>
</dbReference>
<dbReference type="Gene3D" id="6.10.140.140">
    <property type="match status" value="1"/>
</dbReference>
<dbReference type="Gene3D" id="3.30.160.60">
    <property type="entry name" value="Classic Zinc Finger"/>
    <property type="match status" value="9"/>
</dbReference>
<dbReference type="InterPro" id="IPR001909">
    <property type="entry name" value="KRAB"/>
</dbReference>
<dbReference type="InterPro" id="IPR036051">
    <property type="entry name" value="KRAB_dom_sf"/>
</dbReference>
<dbReference type="InterPro" id="IPR050331">
    <property type="entry name" value="Zinc_finger"/>
</dbReference>
<dbReference type="InterPro" id="IPR036236">
    <property type="entry name" value="Znf_C2H2_sf"/>
</dbReference>
<dbReference type="InterPro" id="IPR013087">
    <property type="entry name" value="Znf_C2H2_type"/>
</dbReference>
<dbReference type="PANTHER" id="PTHR16515">
    <property type="entry name" value="PR DOMAIN ZINC FINGER PROTEIN"/>
    <property type="match status" value="1"/>
</dbReference>
<dbReference type="PANTHER" id="PTHR16515:SF57">
    <property type="entry name" value="ZINC FINGER PROTEIN 154-LIKE"/>
    <property type="match status" value="1"/>
</dbReference>
<dbReference type="Pfam" id="PF01352">
    <property type="entry name" value="KRAB"/>
    <property type="match status" value="1"/>
</dbReference>
<dbReference type="Pfam" id="PF00096">
    <property type="entry name" value="zf-C2H2"/>
    <property type="match status" value="7"/>
</dbReference>
<dbReference type="SMART" id="SM00349">
    <property type="entry name" value="KRAB"/>
    <property type="match status" value="1"/>
</dbReference>
<dbReference type="SMART" id="SM00355">
    <property type="entry name" value="ZnF_C2H2"/>
    <property type="match status" value="9"/>
</dbReference>
<dbReference type="SUPFAM" id="SSF57667">
    <property type="entry name" value="beta-beta-alpha zinc fingers"/>
    <property type="match status" value="6"/>
</dbReference>
<dbReference type="SUPFAM" id="SSF109640">
    <property type="entry name" value="KRAB domain (Kruppel-associated box)"/>
    <property type="match status" value="1"/>
</dbReference>
<dbReference type="PROSITE" id="PS50805">
    <property type="entry name" value="KRAB"/>
    <property type="match status" value="1"/>
</dbReference>
<dbReference type="PROSITE" id="PS00028">
    <property type="entry name" value="ZINC_FINGER_C2H2_1"/>
    <property type="match status" value="9"/>
</dbReference>
<dbReference type="PROSITE" id="PS50157">
    <property type="entry name" value="ZINC_FINGER_C2H2_2"/>
    <property type="match status" value="9"/>
</dbReference>
<feature type="chain" id="PRO_0000233988" description="Zinc finger protein 669">
    <location>
        <begin position="1"/>
        <end position="464"/>
    </location>
</feature>
<feature type="domain" description="KRAB" evidence="2">
    <location>
        <begin position="90"/>
        <end position="176"/>
    </location>
</feature>
<feature type="zinc finger region" description="C2H2-type 1" evidence="1">
    <location>
        <begin position="189"/>
        <end position="211"/>
    </location>
</feature>
<feature type="zinc finger region" description="C2H2-type 2" evidence="1">
    <location>
        <begin position="222"/>
        <end position="244"/>
    </location>
</feature>
<feature type="zinc finger region" description="C2H2-type 3" evidence="1">
    <location>
        <begin position="250"/>
        <end position="272"/>
    </location>
</feature>
<feature type="zinc finger region" description="C2H2-type 4" evidence="1">
    <location>
        <begin position="278"/>
        <end position="300"/>
    </location>
</feature>
<feature type="zinc finger region" description="C2H2-type 5" evidence="1">
    <location>
        <begin position="306"/>
        <end position="328"/>
    </location>
</feature>
<feature type="zinc finger region" description="C2H2-type 6" evidence="1">
    <location>
        <begin position="334"/>
        <end position="356"/>
    </location>
</feature>
<feature type="zinc finger region" description="C2H2-type 7" evidence="1">
    <location>
        <begin position="362"/>
        <end position="384"/>
    </location>
</feature>
<feature type="zinc finger region" description="C2H2-type 8" evidence="1">
    <location>
        <begin position="390"/>
        <end position="412"/>
    </location>
</feature>
<feature type="zinc finger region" description="C2H2-type 9" evidence="1">
    <location>
        <begin position="418"/>
        <end position="440"/>
    </location>
</feature>
<feature type="splice variant" id="VSP_047204" description="In isoform 2." evidence="4">
    <original>MVSGLRLASRSGEEGWLKPAVARLGPPRHRLRNLRTESPWRSRGSVLFCSGPGRAGRAAEPLHPVCTCGRHFRRPEPCREPLASPIQ</original>
    <variation>M</variation>
    <location>
        <begin position="1"/>
        <end position="87"/>
    </location>
</feature>
<feature type="sequence variant" id="VAR_057439" description="In dbSNP:rs4925692." evidence="3">
    <original>E</original>
    <variation>D</variation>
    <location>
        <position position="76"/>
    </location>
</feature>
<feature type="sequence variant" id="VAR_059928" description="In dbSNP:rs7533935.">
    <original>G</original>
    <variation>S</variation>
    <location>
        <position position="460"/>
    </location>
</feature>
<feature type="sequence conflict" description="In Ref. 1; BAB14166." evidence="5" ref="1">
    <original>L</original>
    <variation>F</variation>
    <location>
        <position position="204"/>
    </location>
</feature>
<feature type="sequence conflict" description="In Ref. 3; AAH15312." evidence="5" ref="3">
    <original>Y</original>
    <variation>C</variation>
    <location>
        <position position="451"/>
    </location>
</feature>
<name>ZN669_HUMAN</name>
<keyword id="KW-0025">Alternative splicing</keyword>
<keyword id="KW-0238">DNA-binding</keyword>
<keyword id="KW-0479">Metal-binding</keyword>
<keyword id="KW-0539">Nucleus</keyword>
<keyword id="KW-1267">Proteomics identification</keyword>
<keyword id="KW-1185">Reference proteome</keyword>
<keyword id="KW-0677">Repeat</keyword>
<keyword id="KW-0804">Transcription</keyword>
<keyword id="KW-0805">Transcription regulation</keyword>
<keyword id="KW-0862">Zinc</keyword>
<keyword id="KW-0863">Zinc-finger</keyword>
<protein>
    <recommendedName>
        <fullName>Zinc finger protein 669</fullName>
    </recommendedName>
</protein>
<gene>
    <name type="primary">ZNF669</name>
</gene>
<proteinExistence type="evidence at protein level"/>
<sequence>MVSGLRLASRSGEEGWLKPAVARLGPPRHRLRNLRTESPWRSRGSVLFCSGPGRAGRAAEPLHPVCTCGRHFRRPEPCREPLASPIQDSVAFEDVAVNFTQEEWALLDSSQKNLYREVMQETCRNLASVGSQWKDQNIEDHFEKPGKDIRNHIVQRLCESKEDGQYGEVVSQIPNLDLNENISTGLKPCECSICGKVFVRHSLLNRHILAHSGYKPYGEKQYKCEQCGKFFVSVPGVRRHMIMHSGNPAYKCTICGKAFYFLNSVERHQRTHTGEKPYKCKQCGKAFTVSGSCLIHERTHTGEKPYECKECGKTFRFSCSFKTHERTHTGERPYKCTKCDKAFSCSTSLRYHGSIHTGERPYECKQCGKAFSRLSSLCNHRSTHTGEKPYECKQCDQAFSRLSSLHLHERIHTGEKPYECKKCGKAYTRSSHLTRHERSHDIEAGCSDSAYNPSTLGGQGVWIA</sequence>
<organism>
    <name type="scientific">Homo sapiens</name>
    <name type="common">Human</name>
    <dbReference type="NCBI Taxonomy" id="9606"/>
    <lineage>
        <taxon>Eukaryota</taxon>
        <taxon>Metazoa</taxon>
        <taxon>Chordata</taxon>
        <taxon>Craniata</taxon>
        <taxon>Vertebrata</taxon>
        <taxon>Euteleostomi</taxon>
        <taxon>Mammalia</taxon>
        <taxon>Eutheria</taxon>
        <taxon>Euarchontoglires</taxon>
        <taxon>Primates</taxon>
        <taxon>Haplorrhini</taxon>
        <taxon>Catarrhini</taxon>
        <taxon>Hominidae</taxon>
        <taxon>Homo</taxon>
    </lineage>
</organism>
<reference key="1">
    <citation type="journal article" date="2004" name="Nat. Genet.">
        <title>Complete sequencing and characterization of 21,243 full-length human cDNAs.</title>
        <authorList>
            <person name="Ota T."/>
            <person name="Suzuki Y."/>
            <person name="Nishikawa T."/>
            <person name="Otsuki T."/>
            <person name="Sugiyama T."/>
            <person name="Irie R."/>
            <person name="Wakamatsu A."/>
            <person name="Hayashi K."/>
            <person name="Sato H."/>
            <person name="Nagai K."/>
            <person name="Kimura K."/>
            <person name="Makita H."/>
            <person name="Sekine M."/>
            <person name="Obayashi M."/>
            <person name="Nishi T."/>
            <person name="Shibahara T."/>
            <person name="Tanaka T."/>
            <person name="Ishii S."/>
            <person name="Yamamoto J."/>
            <person name="Saito K."/>
            <person name="Kawai Y."/>
            <person name="Isono Y."/>
            <person name="Nakamura Y."/>
            <person name="Nagahari K."/>
            <person name="Murakami K."/>
            <person name="Yasuda T."/>
            <person name="Iwayanagi T."/>
            <person name="Wagatsuma M."/>
            <person name="Shiratori A."/>
            <person name="Sudo H."/>
            <person name="Hosoiri T."/>
            <person name="Kaku Y."/>
            <person name="Kodaira H."/>
            <person name="Kondo H."/>
            <person name="Sugawara M."/>
            <person name="Takahashi M."/>
            <person name="Kanda K."/>
            <person name="Yokoi T."/>
            <person name="Furuya T."/>
            <person name="Kikkawa E."/>
            <person name="Omura Y."/>
            <person name="Abe K."/>
            <person name="Kamihara K."/>
            <person name="Katsuta N."/>
            <person name="Sato K."/>
            <person name="Tanikawa M."/>
            <person name="Yamazaki M."/>
            <person name="Ninomiya K."/>
            <person name="Ishibashi T."/>
            <person name="Yamashita H."/>
            <person name="Murakawa K."/>
            <person name="Fujimori K."/>
            <person name="Tanai H."/>
            <person name="Kimata M."/>
            <person name="Watanabe M."/>
            <person name="Hiraoka S."/>
            <person name="Chiba Y."/>
            <person name="Ishida S."/>
            <person name="Ono Y."/>
            <person name="Takiguchi S."/>
            <person name="Watanabe S."/>
            <person name="Yosida M."/>
            <person name="Hotuta T."/>
            <person name="Kusano J."/>
            <person name="Kanehori K."/>
            <person name="Takahashi-Fujii A."/>
            <person name="Hara H."/>
            <person name="Tanase T.-O."/>
            <person name="Nomura Y."/>
            <person name="Togiya S."/>
            <person name="Komai F."/>
            <person name="Hara R."/>
            <person name="Takeuchi K."/>
            <person name="Arita M."/>
            <person name="Imose N."/>
            <person name="Musashino K."/>
            <person name="Yuuki H."/>
            <person name="Oshima A."/>
            <person name="Sasaki N."/>
            <person name="Aotsuka S."/>
            <person name="Yoshikawa Y."/>
            <person name="Matsunawa H."/>
            <person name="Ichihara T."/>
            <person name="Shiohata N."/>
            <person name="Sano S."/>
            <person name="Moriya S."/>
            <person name="Momiyama H."/>
            <person name="Satoh N."/>
            <person name="Takami S."/>
            <person name="Terashima Y."/>
            <person name="Suzuki O."/>
            <person name="Nakagawa S."/>
            <person name="Senoh A."/>
            <person name="Mizoguchi H."/>
            <person name="Goto Y."/>
            <person name="Shimizu F."/>
            <person name="Wakebe H."/>
            <person name="Hishigaki H."/>
            <person name="Watanabe T."/>
            <person name="Sugiyama A."/>
            <person name="Takemoto M."/>
            <person name="Kawakami B."/>
            <person name="Yamazaki M."/>
            <person name="Watanabe K."/>
            <person name="Kumagai A."/>
            <person name="Itakura S."/>
            <person name="Fukuzumi Y."/>
            <person name="Fujimori Y."/>
            <person name="Komiyama M."/>
            <person name="Tashiro H."/>
            <person name="Tanigami A."/>
            <person name="Fujiwara T."/>
            <person name="Ono T."/>
            <person name="Yamada K."/>
            <person name="Fujii Y."/>
            <person name="Ozaki K."/>
            <person name="Hirao M."/>
            <person name="Ohmori Y."/>
            <person name="Kawabata A."/>
            <person name="Hikiji T."/>
            <person name="Kobatake N."/>
            <person name="Inagaki H."/>
            <person name="Ikema Y."/>
            <person name="Okamoto S."/>
            <person name="Okitani R."/>
            <person name="Kawakami T."/>
            <person name="Noguchi S."/>
            <person name="Itoh T."/>
            <person name="Shigeta K."/>
            <person name="Senba T."/>
            <person name="Matsumura K."/>
            <person name="Nakajima Y."/>
            <person name="Mizuno T."/>
            <person name="Morinaga M."/>
            <person name="Sasaki M."/>
            <person name="Togashi T."/>
            <person name="Oyama M."/>
            <person name="Hata H."/>
            <person name="Watanabe M."/>
            <person name="Komatsu T."/>
            <person name="Mizushima-Sugano J."/>
            <person name="Satoh T."/>
            <person name="Shirai Y."/>
            <person name="Takahashi Y."/>
            <person name="Nakagawa K."/>
            <person name="Okumura K."/>
            <person name="Nagase T."/>
            <person name="Nomura N."/>
            <person name="Kikuchi H."/>
            <person name="Masuho Y."/>
            <person name="Yamashita R."/>
            <person name="Nakai K."/>
            <person name="Yada T."/>
            <person name="Nakamura Y."/>
            <person name="Ohara O."/>
            <person name="Isogai T."/>
            <person name="Sugano S."/>
        </authorList>
    </citation>
    <scope>NUCLEOTIDE SEQUENCE [LARGE SCALE MRNA] (ISOFORMS 1 AND 2)</scope>
    <source>
        <tissue>Teratocarcinoma</tissue>
    </source>
</reference>
<reference key="2">
    <citation type="journal article" date="2006" name="Nature">
        <title>The DNA sequence and biological annotation of human chromosome 1.</title>
        <authorList>
            <person name="Gregory S.G."/>
            <person name="Barlow K.F."/>
            <person name="McLay K.E."/>
            <person name="Kaul R."/>
            <person name="Swarbreck D."/>
            <person name="Dunham A."/>
            <person name="Scott C.E."/>
            <person name="Howe K.L."/>
            <person name="Woodfine K."/>
            <person name="Spencer C.C.A."/>
            <person name="Jones M.C."/>
            <person name="Gillson C."/>
            <person name="Searle S."/>
            <person name="Zhou Y."/>
            <person name="Kokocinski F."/>
            <person name="McDonald L."/>
            <person name="Evans R."/>
            <person name="Phillips K."/>
            <person name="Atkinson A."/>
            <person name="Cooper R."/>
            <person name="Jones C."/>
            <person name="Hall R.E."/>
            <person name="Andrews T.D."/>
            <person name="Lloyd C."/>
            <person name="Ainscough R."/>
            <person name="Almeida J.P."/>
            <person name="Ambrose K.D."/>
            <person name="Anderson F."/>
            <person name="Andrew R.W."/>
            <person name="Ashwell R.I.S."/>
            <person name="Aubin K."/>
            <person name="Babbage A.K."/>
            <person name="Bagguley C.L."/>
            <person name="Bailey J."/>
            <person name="Beasley H."/>
            <person name="Bethel G."/>
            <person name="Bird C.P."/>
            <person name="Bray-Allen S."/>
            <person name="Brown J.Y."/>
            <person name="Brown A.J."/>
            <person name="Buckley D."/>
            <person name="Burton J."/>
            <person name="Bye J."/>
            <person name="Carder C."/>
            <person name="Chapman J.C."/>
            <person name="Clark S.Y."/>
            <person name="Clarke G."/>
            <person name="Clee C."/>
            <person name="Cobley V."/>
            <person name="Collier R.E."/>
            <person name="Corby N."/>
            <person name="Coville G.J."/>
            <person name="Davies J."/>
            <person name="Deadman R."/>
            <person name="Dunn M."/>
            <person name="Earthrowl M."/>
            <person name="Ellington A.G."/>
            <person name="Errington H."/>
            <person name="Frankish A."/>
            <person name="Frankland J."/>
            <person name="French L."/>
            <person name="Garner P."/>
            <person name="Garnett J."/>
            <person name="Gay L."/>
            <person name="Ghori M.R.J."/>
            <person name="Gibson R."/>
            <person name="Gilby L.M."/>
            <person name="Gillett W."/>
            <person name="Glithero R.J."/>
            <person name="Grafham D.V."/>
            <person name="Griffiths C."/>
            <person name="Griffiths-Jones S."/>
            <person name="Grocock R."/>
            <person name="Hammond S."/>
            <person name="Harrison E.S.I."/>
            <person name="Hart E."/>
            <person name="Haugen E."/>
            <person name="Heath P.D."/>
            <person name="Holmes S."/>
            <person name="Holt K."/>
            <person name="Howden P.J."/>
            <person name="Hunt A.R."/>
            <person name="Hunt S.E."/>
            <person name="Hunter G."/>
            <person name="Isherwood J."/>
            <person name="James R."/>
            <person name="Johnson C."/>
            <person name="Johnson D."/>
            <person name="Joy A."/>
            <person name="Kay M."/>
            <person name="Kershaw J.K."/>
            <person name="Kibukawa M."/>
            <person name="Kimberley A.M."/>
            <person name="King A."/>
            <person name="Knights A.J."/>
            <person name="Lad H."/>
            <person name="Laird G."/>
            <person name="Lawlor S."/>
            <person name="Leongamornlert D.A."/>
            <person name="Lloyd D.M."/>
            <person name="Loveland J."/>
            <person name="Lovell J."/>
            <person name="Lush M.J."/>
            <person name="Lyne R."/>
            <person name="Martin S."/>
            <person name="Mashreghi-Mohammadi M."/>
            <person name="Matthews L."/>
            <person name="Matthews N.S.W."/>
            <person name="McLaren S."/>
            <person name="Milne S."/>
            <person name="Mistry S."/>
            <person name="Moore M.J.F."/>
            <person name="Nickerson T."/>
            <person name="O'Dell C.N."/>
            <person name="Oliver K."/>
            <person name="Palmeiri A."/>
            <person name="Palmer S.A."/>
            <person name="Parker A."/>
            <person name="Patel D."/>
            <person name="Pearce A.V."/>
            <person name="Peck A.I."/>
            <person name="Pelan S."/>
            <person name="Phelps K."/>
            <person name="Phillimore B.J."/>
            <person name="Plumb R."/>
            <person name="Rajan J."/>
            <person name="Raymond C."/>
            <person name="Rouse G."/>
            <person name="Saenphimmachak C."/>
            <person name="Sehra H.K."/>
            <person name="Sheridan E."/>
            <person name="Shownkeen R."/>
            <person name="Sims S."/>
            <person name="Skuce C.D."/>
            <person name="Smith M."/>
            <person name="Steward C."/>
            <person name="Subramanian S."/>
            <person name="Sycamore N."/>
            <person name="Tracey A."/>
            <person name="Tromans A."/>
            <person name="Van Helmond Z."/>
            <person name="Wall M."/>
            <person name="Wallis J.M."/>
            <person name="White S."/>
            <person name="Whitehead S.L."/>
            <person name="Wilkinson J.E."/>
            <person name="Willey D.L."/>
            <person name="Williams H."/>
            <person name="Wilming L."/>
            <person name="Wray P.W."/>
            <person name="Wu Z."/>
            <person name="Coulson A."/>
            <person name="Vaudin M."/>
            <person name="Sulston J.E."/>
            <person name="Durbin R.M."/>
            <person name="Hubbard T."/>
            <person name="Wooster R."/>
            <person name="Dunham I."/>
            <person name="Carter N.P."/>
            <person name="McVean G."/>
            <person name="Ross M.T."/>
            <person name="Harrow J."/>
            <person name="Olson M.V."/>
            <person name="Beck S."/>
            <person name="Rogers J."/>
            <person name="Bentley D.R."/>
        </authorList>
    </citation>
    <scope>NUCLEOTIDE SEQUENCE [LARGE SCALE GENOMIC DNA]</scope>
</reference>
<reference key="3">
    <citation type="journal article" date="2004" name="Genome Res.">
        <title>The status, quality, and expansion of the NIH full-length cDNA project: the Mammalian Gene Collection (MGC).</title>
        <authorList>
            <consortium name="The MGC Project Team"/>
        </authorList>
    </citation>
    <scope>NUCLEOTIDE SEQUENCE [LARGE SCALE MRNA] (ISOFORM 1)</scope>
    <scope>VARIANT ASP-76</scope>
    <source>
        <tissue>Liver</tissue>
    </source>
</reference>
<evidence type="ECO:0000255" key="1">
    <source>
        <dbReference type="PROSITE-ProRule" id="PRU00042"/>
    </source>
</evidence>
<evidence type="ECO:0000255" key="2">
    <source>
        <dbReference type="PROSITE-ProRule" id="PRU00119"/>
    </source>
</evidence>
<evidence type="ECO:0000269" key="3">
    <source>
    </source>
</evidence>
<evidence type="ECO:0000303" key="4">
    <source>
    </source>
</evidence>
<evidence type="ECO:0000305" key="5"/>